<proteinExistence type="predicted"/>
<gene>
    <name type="ordered locus">MIMI_R726</name>
</gene>
<dbReference type="EMBL" id="AY653733">
    <property type="protein sequence ID" value="AAV50986.1"/>
    <property type="molecule type" value="Genomic_DNA"/>
</dbReference>
<dbReference type="SMR" id="Q5UNX4"/>
<dbReference type="KEGG" id="vg:9925380"/>
<dbReference type="OrthoDB" id="38196at10239"/>
<dbReference type="Proteomes" id="UP000001134">
    <property type="component" value="Genome"/>
</dbReference>
<accession>Q5UNX4</accession>
<name>YR726_MIMIV</name>
<keyword id="KW-1185">Reference proteome</keyword>
<feature type="chain" id="PRO_0000250632" description="Uncharacterized protein R726">
    <location>
        <begin position="1"/>
        <end position="162"/>
    </location>
</feature>
<reference key="1">
    <citation type="journal article" date="2004" name="Science">
        <title>The 1.2-megabase genome sequence of Mimivirus.</title>
        <authorList>
            <person name="Raoult D."/>
            <person name="Audic S."/>
            <person name="Robert C."/>
            <person name="Abergel C."/>
            <person name="Renesto P."/>
            <person name="Ogata H."/>
            <person name="La Scola B."/>
            <person name="Susan M."/>
            <person name="Claverie J.-M."/>
        </authorList>
    </citation>
    <scope>NUCLEOTIDE SEQUENCE [LARGE SCALE GENOMIC DNA]</scope>
    <source>
        <strain>Rowbotham-Bradford</strain>
    </source>
</reference>
<organismHost>
    <name type="scientific">Acanthamoeba polyphaga</name>
    <name type="common">Amoeba</name>
    <dbReference type="NCBI Taxonomy" id="5757"/>
</organismHost>
<sequence>MIQLYTSNGNFDYTCLILAGPAEMKNIVIDHDLFSIFKDHVSCIHNISEITDNSISQVVSMSIESIDSDNIDSIKEFENKLQNPIKTNLFVFGSKIVLKLFGLNRLSDIYITSDYYDIETILENRGKCSVHYMDPILFKKYGDIVGVKYYEYDYNDEYDYNY</sequence>
<protein>
    <recommendedName>
        <fullName>Uncharacterized protein R726</fullName>
    </recommendedName>
</protein>
<organism>
    <name type="scientific">Acanthamoeba polyphaga mimivirus</name>
    <name type="common">APMV</name>
    <dbReference type="NCBI Taxonomy" id="212035"/>
    <lineage>
        <taxon>Viruses</taxon>
        <taxon>Varidnaviria</taxon>
        <taxon>Bamfordvirae</taxon>
        <taxon>Nucleocytoviricota</taxon>
        <taxon>Megaviricetes</taxon>
        <taxon>Imitervirales</taxon>
        <taxon>Mimiviridae</taxon>
        <taxon>Megamimivirinae</taxon>
        <taxon>Mimivirus</taxon>
        <taxon>Mimivirus bradfordmassiliense</taxon>
    </lineage>
</organism>